<accession>A6H7B8</accession>
<feature type="chain" id="PRO_0000326092" description="Acyltransferase PGAP2">
    <location>
        <begin position="1"/>
        <end position="254"/>
    </location>
</feature>
<feature type="topological domain" description="Cytoplasmic" evidence="4">
    <location>
        <begin position="1"/>
        <end position="23"/>
    </location>
</feature>
<feature type="transmembrane region" description="Helical" evidence="4">
    <location>
        <begin position="24"/>
        <end position="44"/>
    </location>
</feature>
<feature type="topological domain" description="Lumenal" evidence="4">
    <location>
        <begin position="45"/>
        <end position="114"/>
    </location>
</feature>
<feature type="transmembrane region" description="Helical" evidence="4">
    <location>
        <begin position="115"/>
        <end position="135"/>
    </location>
</feature>
<feature type="topological domain" description="Cytoplasmic" evidence="4">
    <location>
        <begin position="136"/>
        <end position="143"/>
    </location>
</feature>
<feature type="transmembrane region" description="Helical" evidence="4">
    <location>
        <begin position="144"/>
        <end position="164"/>
    </location>
</feature>
<feature type="topological domain" description="Lumenal" evidence="4">
    <location>
        <begin position="165"/>
        <end position="185"/>
    </location>
</feature>
<feature type="transmembrane region" description="Helical" evidence="4">
    <location>
        <begin position="186"/>
        <end position="206"/>
    </location>
</feature>
<feature type="topological domain" description="Cytoplasmic" evidence="4">
    <location>
        <begin position="207"/>
        <end position="209"/>
    </location>
</feature>
<feature type="transmembrane region" description="Helical" evidence="4">
    <location>
        <begin position="210"/>
        <end position="230"/>
    </location>
</feature>
<feature type="topological domain" description="Lumenal" evidence="4">
    <location>
        <begin position="231"/>
        <end position="254"/>
    </location>
</feature>
<organism>
    <name type="scientific">Bos taurus</name>
    <name type="common">Bovine</name>
    <dbReference type="NCBI Taxonomy" id="9913"/>
    <lineage>
        <taxon>Eukaryota</taxon>
        <taxon>Metazoa</taxon>
        <taxon>Chordata</taxon>
        <taxon>Craniata</taxon>
        <taxon>Vertebrata</taxon>
        <taxon>Euteleostomi</taxon>
        <taxon>Mammalia</taxon>
        <taxon>Eutheria</taxon>
        <taxon>Laurasiatheria</taxon>
        <taxon>Artiodactyla</taxon>
        <taxon>Ruminantia</taxon>
        <taxon>Pecora</taxon>
        <taxon>Bovidae</taxon>
        <taxon>Bovinae</taxon>
        <taxon>Bos</taxon>
    </lineage>
</organism>
<evidence type="ECO:0000250" key="1">
    <source>
        <dbReference type="UniProtKB" id="Q2ABP2"/>
    </source>
</evidence>
<evidence type="ECO:0000250" key="2">
    <source>
        <dbReference type="UniProtKB" id="Q3TQR0"/>
    </source>
</evidence>
<evidence type="ECO:0000250" key="3">
    <source>
        <dbReference type="UniProtKB" id="Q9UHJ9"/>
    </source>
</evidence>
<evidence type="ECO:0000255" key="4"/>
<evidence type="ECO:0000305" key="5"/>
<comment type="function">
    <text evidence="1">Involved in the fatty acid remodeling steps of GPI-anchor maturation where the unsaturated acyl chain at sn-2 of inositol phosphate is replaced by a saturated stearoyl chain. May catalyze the second step of the fatty acid remodeling, by reacylating a lyso-GPI intermediate at sn-2 of inositol phosphate by a saturated chain. The fatty acid remodeling steps is critical for the integration of GPI-APs into lipid rafts.</text>
</comment>
<comment type="subunit">
    <text evidence="2">Interacts with PGAP2IP.</text>
</comment>
<comment type="subcellular location">
    <subcellularLocation>
        <location evidence="3">Golgi apparatus membrane</location>
        <topology evidence="4">Multi-pass membrane protein</topology>
    </subcellularLocation>
</comment>
<comment type="similarity">
    <text evidence="5">Belongs to the PGAP2 family.</text>
</comment>
<keyword id="KW-0333">Golgi apparatus</keyword>
<keyword id="KW-0337">GPI-anchor biosynthesis</keyword>
<keyword id="KW-0472">Membrane</keyword>
<keyword id="KW-1185">Reference proteome</keyword>
<keyword id="KW-0808">Transferase</keyword>
<keyword id="KW-0812">Transmembrane</keyword>
<keyword id="KW-1133">Transmembrane helix</keyword>
<gene>
    <name evidence="3" type="primary">PGAP2</name>
</gene>
<dbReference type="EC" id="2.3.-.-" evidence="1"/>
<dbReference type="EMBL" id="BC146186">
    <property type="protein sequence ID" value="AAI46187.1"/>
    <property type="molecule type" value="mRNA"/>
</dbReference>
<dbReference type="RefSeq" id="NP_001092581.1">
    <property type="nucleotide sequence ID" value="NM_001099111.1"/>
</dbReference>
<dbReference type="RefSeq" id="XP_010810970.1">
    <property type="nucleotide sequence ID" value="XM_010812668.4"/>
</dbReference>
<dbReference type="RefSeq" id="XP_015330253.1">
    <property type="nucleotide sequence ID" value="XM_015474767.1"/>
</dbReference>
<dbReference type="RefSeq" id="XP_059730924.1">
    <property type="nucleotide sequence ID" value="XM_059874941.1"/>
</dbReference>
<dbReference type="FunCoup" id="A6H7B8">
    <property type="interactions" value="815"/>
</dbReference>
<dbReference type="STRING" id="9913.ENSBTAP00000071195"/>
<dbReference type="PaxDb" id="9913-ENSBTAP00000011097"/>
<dbReference type="GeneID" id="540520"/>
<dbReference type="KEGG" id="bta:540520"/>
<dbReference type="CTD" id="27315"/>
<dbReference type="eggNOG" id="KOG3979">
    <property type="taxonomic scope" value="Eukaryota"/>
</dbReference>
<dbReference type="HOGENOM" id="CLU_061191_1_0_1"/>
<dbReference type="InParanoid" id="A6H7B8"/>
<dbReference type="OrthoDB" id="68581at2759"/>
<dbReference type="TreeFam" id="TF314112"/>
<dbReference type="Proteomes" id="UP000009136">
    <property type="component" value="Unplaced"/>
</dbReference>
<dbReference type="GO" id="GO:0005789">
    <property type="term" value="C:endoplasmic reticulum membrane"/>
    <property type="evidence" value="ECO:0000250"/>
    <property type="project" value="UniProtKB"/>
</dbReference>
<dbReference type="GO" id="GO:0000139">
    <property type="term" value="C:Golgi membrane"/>
    <property type="evidence" value="ECO:0000250"/>
    <property type="project" value="UniProtKB"/>
</dbReference>
<dbReference type="GO" id="GO:0006506">
    <property type="term" value="P:GPI anchor biosynthetic process"/>
    <property type="evidence" value="ECO:0000250"/>
    <property type="project" value="UniProtKB"/>
</dbReference>
<dbReference type="InterPro" id="IPR019402">
    <property type="entry name" value="Frag1/DRAM/Sfk1"/>
</dbReference>
<dbReference type="InterPro" id="IPR039545">
    <property type="entry name" value="PGAP2"/>
</dbReference>
<dbReference type="PANTHER" id="PTHR12892">
    <property type="entry name" value="FGF RECEPTOR ACTIVATING PROTEIN 1"/>
    <property type="match status" value="1"/>
</dbReference>
<dbReference type="PANTHER" id="PTHR12892:SF21">
    <property type="entry name" value="POST-GPI ATTACHMENT TO PROTEINS FACTOR 2"/>
    <property type="match status" value="1"/>
</dbReference>
<dbReference type="Pfam" id="PF10277">
    <property type="entry name" value="Frag1"/>
    <property type="match status" value="1"/>
</dbReference>
<sequence length="254" mass="29349">MYQVPLPLDRDGTLVRLRFTLVALVTVCCPLVAFLFCVLWSLLFHFKETTATHCGVPNYLPSVSSAIGGEVPQRYVWRFCIGLHSAPRFLVAFAYWNHYLSCTSPCAGYRPLCRLNFGLNVVENVALLVLTYVSSSEDFTIHENAFIVFIASSLSHMLLTCILWRLTKKHTVSQEDRKSYNWKQRLFIINFVSFFTALAVYFRHNMYCEAGVYTIFAILEYTVVLTNMAFHMTAWWDFGNKELLITSQPEEKRF</sequence>
<reference key="1">
    <citation type="submission" date="2007-06" db="EMBL/GenBank/DDBJ databases">
        <authorList>
            <consortium name="NIH - Mammalian Gene Collection (MGC) project"/>
        </authorList>
    </citation>
    <scope>NUCLEOTIDE SEQUENCE [LARGE SCALE MRNA]</scope>
    <source>
        <strain>Hereford</strain>
        <tissue>Brain cortex</tissue>
    </source>
</reference>
<protein>
    <recommendedName>
        <fullName evidence="5">Acyltransferase PGAP2</fullName>
        <ecNumber evidence="1">2.3.-.-</ecNumber>
    </recommendedName>
    <alternativeName>
        <fullName>Post-GPI attachment to proteins factor 2</fullName>
    </alternativeName>
</protein>
<name>PGAP2_BOVIN</name>
<proteinExistence type="evidence at transcript level"/>